<organism>
    <name type="scientific">Salmonella typhimurium (strain LT2 / SGSC1412 / ATCC 700720)</name>
    <dbReference type="NCBI Taxonomy" id="99287"/>
    <lineage>
        <taxon>Bacteria</taxon>
        <taxon>Pseudomonadati</taxon>
        <taxon>Pseudomonadota</taxon>
        <taxon>Gammaproteobacteria</taxon>
        <taxon>Enterobacterales</taxon>
        <taxon>Enterobacteriaceae</taxon>
        <taxon>Salmonella</taxon>
    </lineage>
</organism>
<feature type="chain" id="PRO_0000205511" description="Oxygen-insensitive NADPH nitroreductase">
    <location>
        <begin position="1"/>
        <end position="240"/>
    </location>
</feature>
<feature type="binding site" evidence="1">
    <location>
        <begin position="11"/>
        <end position="15"/>
    </location>
    <ligand>
        <name>FMN</name>
        <dbReference type="ChEBI" id="CHEBI:58210"/>
    </ligand>
</feature>
<feature type="binding site" evidence="1">
    <location>
        <position position="39"/>
    </location>
    <ligand>
        <name>FMN</name>
        <dbReference type="ChEBI" id="CHEBI:58210"/>
    </ligand>
</feature>
<feature type="binding site" evidence="1">
    <location>
        <position position="67"/>
    </location>
    <ligand>
        <name>FMN</name>
        <dbReference type="ChEBI" id="CHEBI:58210"/>
    </ligand>
</feature>
<feature type="binding site" evidence="1">
    <location>
        <begin position="128"/>
        <end position="131"/>
    </location>
    <ligand>
        <name>FMN</name>
        <dbReference type="ChEBI" id="CHEBI:58210"/>
    </ligand>
</feature>
<feature type="binding site" evidence="1">
    <location>
        <begin position="167"/>
        <end position="169"/>
    </location>
    <ligand>
        <name>FMN</name>
        <dbReference type="ChEBI" id="CHEBI:58210"/>
    </ligand>
</feature>
<feature type="sequence conflict" description="In Ref. 1; AAD18027." evidence="2" ref="1">
    <original>DA</original>
    <variation>EP</variation>
    <location>
        <begin position="24"/>
        <end position="25"/>
    </location>
</feature>
<feature type="sequence conflict" description="In Ref. 1; AAD18027." evidence="2" ref="1">
    <original>IAA</original>
    <variation>NCR</variation>
    <location>
        <begin position="31"/>
        <end position="33"/>
    </location>
</feature>
<feature type="sequence conflict" description="In Ref. 1; AAD18027." evidence="2" ref="1">
    <original>VP</original>
    <variation>SC</variation>
    <location>
        <begin position="61"/>
        <end position="62"/>
    </location>
</feature>
<feature type="sequence conflict" description="In Ref. 1; AAD18027." evidence="2" ref="1">
    <original>D</original>
    <variation>G</variation>
    <location>
        <position position="162"/>
    </location>
</feature>
<keyword id="KW-0285">Flavoprotein</keyword>
<keyword id="KW-0288">FMN</keyword>
<keyword id="KW-0521">NADP</keyword>
<keyword id="KW-0560">Oxidoreductase</keyword>
<keyword id="KW-1185">Reference proteome</keyword>
<dbReference type="EC" id="1.-.-.-" evidence="1"/>
<dbReference type="EMBL" id="AF117952">
    <property type="protein sequence ID" value="AAD18027.1"/>
    <property type="molecule type" value="Genomic_DNA"/>
</dbReference>
<dbReference type="EMBL" id="AE006468">
    <property type="protein sequence ID" value="AAL19810.1"/>
    <property type="molecule type" value="Genomic_DNA"/>
</dbReference>
<dbReference type="RefSeq" id="NP_459851.1">
    <property type="nucleotide sequence ID" value="NC_003197.2"/>
</dbReference>
<dbReference type="RefSeq" id="WP_000075300.1">
    <property type="nucleotide sequence ID" value="NC_003197.2"/>
</dbReference>
<dbReference type="SMR" id="Q9Z5Z2"/>
<dbReference type="STRING" id="99287.STM0874"/>
<dbReference type="PaxDb" id="99287-STM0874"/>
<dbReference type="GeneID" id="1252393"/>
<dbReference type="KEGG" id="stm:STM0874"/>
<dbReference type="PATRIC" id="fig|99287.12.peg.913"/>
<dbReference type="HOGENOM" id="CLU_070764_0_2_6"/>
<dbReference type="OMA" id="AHFNQPM"/>
<dbReference type="PhylomeDB" id="Q9Z5Z2"/>
<dbReference type="BioCyc" id="SENT99287:STM0874-MONOMER"/>
<dbReference type="Proteomes" id="UP000001014">
    <property type="component" value="Chromosome"/>
</dbReference>
<dbReference type="GO" id="GO:0016491">
    <property type="term" value="F:oxidoreductase activity"/>
    <property type="evidence" value="ECO:0007669"/>
    <property type="project" value="UniProtKB-KW"/>
</dbReference>
<dbReference type="CDD" id="cd02146">
    <property type="entry name" value="NfsA-like"/>
    <property type="match status" value="1"/>
</dbReference>
<dbReference type="FunFam" id="3.40.109.10:FF:000006">
    <property type="entry name" value="Oxygen-insensitive NADPH nitroreductase"/>
    <property type="match status" value="1"/>
</dbReference>
<dbReference type="Gene3D" id="3.40.109.10">
    <property type="entry name" value="NADH Oxidase"/>
    <property type="match status" value="1"/>
</dbReference>
<dbReference type="InterPro" id="IPR016446">
    <property type="entry name" value="Flavin_OxRdtase_Frp"/>
</dbReference>
<dbReference type="InterPro" id="IPR029479">
    <property type="entry name" value="Nitroreductase"/>
</dbReference>
<dbReference type="InterPro" id="IPR000415">
    <property type="entry name" value="Nitroreductase-like"/>
</dbReference>
<dbReference type="NCBIfam" id="NF008033">
    <property type="entry name" value="PRK10765.1"/>
    <property type="match status" value="1"/>
</dbReference>
<dbReference type="PANTHER" id="PTHR43425">
    <property type="entry name" value="OXYGEN-INSENSITIVE NADPH NITROREDUCTASE"/>
    <property type="match status" value="1"/>
</dbReference>
<dbReference type="PANTHER" id="PTHR43425:SF2">
    <property type="entry name" value="OXYGEN-INSENSITIVE NADPH NITROREDUCTASE"/>
    <property type="match status" value="1"/>
</dbReference>
<dbReference type="Pfam" id="PF00881">
    <property type="entry name" value="Nitroreductase"/>
    <property type="match status" value="1"/>
</dbReference>
<dbReference type="PIRSF" id="PIRSF005426">
    <property type="entry name" value="Frp"/>
    <property type="match status" value="1"/>
</dbReference>
<dbReference type="SUPFAM" id="SSF55469">
    <property type="entry name" value="FMN-dependent nitroreductase-like"/>
    <property type="match status" value="1"/>
</dbReference>
<accession>Q9Z5Z2</accession>
<evidence type="ECO:0000250" key="1">
    <source>
        <dbReference type="UniProtKB" id="P17117"/>
    </source>
</evidence>
<evidence type="ECO:0000305" key="2"/>
<reference key="1">
    <citation type="submission" date="1999-01" db="EMBL/GenBank/DDBJ databases">
        <title>Cloning and characterization of the major nitrotreductase from Salmonella typhimurium TA1535.</title>
        <authorList>
            <person name="Lambert I.B."/>
            <person name="Boroumandi S."/>
            <person name="Nokhbeh M.R."/>
            <person name="Pokorny N.S."/>
            <person name="Koziarz P."/>
        </authorList>
    </citation>
    <scope>NUCLEOTIDE SEQUENCE [GENOMIC DNA]</scope>
    <source>
        <strain>ATCC 29629 / TA 1535</strain>
    </source>
</reference>
<reference key="2">
    <citation type="journal article" date="2001" name="Nature">
        <title>Complete genome sequence of Salmonella enterica serovar Typhimurium LT2.</title>
        <authorList>
            <person name="McClelland M."/>
            <person name="Sanderson K.E."/>
            <person name="Spieth J."/>
            <person name="Clifton S.W."/>
            <person name="Latreille P."/>
            <person name="Courtney L."/>
            <person name="Porwollik S."/>
            <person name="Ali J."/>
            <person name="Dante M."/>
            <person name="Du F."/>
            <person name="Hou S."/>
            <person name="Layman D."/>
            <person name="Leonard S."/>
            <person name="Nguyen C."/>
            <person name="Scott K."/>
            <person name="Holmes A."/>
            <person name="Grewal N."/>
            <person name="Mulvaney E."/>
            <person name="Ryan E."/>
            <person name="Sun H."/>
            <person name="Florea L."/>
            <person name="Miller W."/>
            <person name="Stoneking T."/>
            <person name="Nhan M."/>
            <person name="Waterston R."/>
            <person name="Wilson R.K."/>
        </authorList>
    </citation>
    <scope>NUCLEOTIDE SEQUENCE [LARGE SCALE GENOMIC DNA]</scope>
    <source>
        <strain>LT2 / SGSC1412 / ATCC 700720</strain>
    </source>
</reference>
<gene>
    <name type="primary">nfsA</name>
    <name type="synonym">mdaA</name>
    <name type="synonym">snrA</name>
    <name type="ordered locus">STM0874</name>
</gene>
<name>NFSA_SALTY</name>
<proteinExistence type="inferred from homology"/>
<comment type="function">
    <text evidence="1">Catalyzes the reduction of nitroaromatic compounds using NADPH. Has a broad electron acceptor specificity. Reduces nitrofurazone by a ping-pong bi-bi mechanism possibly to generate a two-electron transfer product.</text>
</comment>
<comment type="cofactor">
    <cofactor evidence="1">
        <name>FMN</name>
        <dbReference type="ChEBI" id="CHEBI:58210"/>
    </cofactor>
    <text evidence="1">Binds 1 FMN per monomer.</text>
</comment>
<comment type="subunit">
    <text evidence="1">Homodimer.</text>
</comment>
<comment type="similarity">
    <text evidence="2">Belongs to the flavin oxidoreductase frp family.</text>
</comment>
<protein>
    <recommendedName>
        <fullName evidence="1">Oxygen-insensitive NADPH nitroreductase</fullName>
        <ecNumber evidence="1">1.-.-.-</ecNumber>
    </recommendedName>
</protein>
<sequence>MSPTIELLCGHRSIRHFTDEPVTDAQREAIIAAARSTSSSSFLQCSSIIRITDRALREALVPLTGGQKHVAQAAEFWVFCADFNRHLQICPDAQLGLAEQLLLGVVDTAMMGQNALTAAESLGLGGVYIGGIRNNIESVTELLKLPKHVLPLFGLCLGWPADNPDLKPRLPAELVVHENQYQPLDEKLLARYDEQLAEYYLTRGSNTRRDTWSDHIRRTLIKENRPFILEYLHKQGWATR</sequence>